<evidence type="ECO:0000255" key="1">
    <source>
        <dbReference type="HAMAP-Rule" id="MF_00211"/>
    </source>
</evidence>
<keyword id="KW-0028">Amino-acid biosynthesis</keyword>
<keyword id="KW-0057">Aromatic amino acid biosynthesis</keyword>
<keyword id="KW-0328">Glycosyltransferase</keyword>
<keyword id="KW-0460">Magnesium</keyword>
<keyword id="KW-0479">Metal-binding</keyword>
<keyword id="KW-1185">Reference proteome</keyword>
<keyword id="KW-0808">Transferase</keyword>
<keyword id="KW-0822">Tryptophan biosynthesis</keyword>
<organism>
    <name type="scientific">Nitrosospira multiformis (strain ATCC 25196 / NCIMB 11849 / C 71)</name>
    <dbReference type="NCBI Taxonomy" id="323848"/>
    <lineage>
        <taxon>Bacteria</taxon>
        <taxon>Pseudomonadati</taxon>
        <taxon>Pseudomonadota</taxon>
        <taxon>Betaproteobacteria</taxon>
        <taxon>Nitrosomonadales</taxon>
        <taxon>Nitrosomonadaceae</taxon>
        <taxon>Nitrosospira</taxon>
    </lineage>
</organism>
<accession>Q2Y5W9</accession>
<dbReference type="EC" id="2.4.2.18" evidence="1"/>
<dbReference type="EMBL" id="CP000103">
    <property type="protein sequence ID" value="ABB75852.1"/>
    <property type="molecule type" value="Genomic_DNA"/>
</dbReference>
<dbReference type="RefSeq" id="WP_011381851.1">
    <property type="nucleotide sequence ID" value="NC_007614.1"/>
</dbReference>
<dbReference type="SMR" id="Q2Y5W9"/>
<dbReference type="STRING" id="323848.Nmul_A2563"/>
<dbReference type="KEGG" id="nmu:Nmul_A2563"/>
<dbReference type="eggNOG" id="COG0547">
    <property type="taxonomic scope" value="Bacteria"/>
</dbReference>
<dbReference type="HOGENOM" id="CLU_034315_2_1_4"/>
<dbReference type="OrthoDB" id="9806430at2"/>
<dbReference type="UniPathway" id="UPA00035">
    <property type="reaction ID" value="UER00041"/>
</dbReference>
<dbReference type="Proteomes" id="UP000002718">
    <property type="component" value="Chromosome"/>
</dbReference>
<dbReference type="GO" id="GO:0005829">
    <property type="term" value="C:cytosol"/>
    <property type="evidence" value="ECO:0007669"/>
    <property type="project" value="TreeGrafter"/>
</dbReference>
<dbReference type="GO" id="GO:0004048">
    <property type="term" value="F:anthranilate phosphoribosyltransferase activity"/>
    <property type="evidence" value="ECO:0007669"/>
    <property type="project" value="UniProtKB-UniRule"/>
</dbReference>
<dbReference type="GO" id="GO:0000287">
    <property type="term" value="F:magnesium ion binding"/>
    <property type="evidence" value="ECO:0007669"/>
    <property type="project" value="UniProtKB-UniRule"/>
</dbReference>
<dbReference type="GO" id="GO:0000162">
    <property type="term" value="P:L-tryptophan biosynthetic process"/>
    <property type="evidence" value="ECO:0007669"/>
    <property type="project" value="UniProtKB-UniRule"/>
</dbReference>
<dbReference type="FunFam" id="1.20.970.10:FF:000006">
    <property type="entry name" value="Anthranilate phosphoribosyltransferase"/>
    <property type="match status" value="1"/>
</dbReference>
<dbReference type="FunFam" id="3.40.1030.10:FF:000002">
    <property type="entry name" value="Anthranilate phosphoribosyltransferase"/>
    <property type="match status" value="1"/>
</dbReference>
<dbReference type="Gene3D" id="3.40.1030.10">
    <property type="entry name" value="Nucleoside phosphorylase/phosphoribosyltransferase catalytic domain"/>
    <property type="match status" value="1"/>
</dbReference>
<dbReference type="Gene3D" id="1.20.970.10">
    <property type="entry name" value="Transferase, Pyrimidine Nucleoside Phosphorylase, Chain C"/>
    <property type="match status" value="1"/>
</dbReference>
<dbReference type="HAMAP" id="MF_00211">
    <property type="entry name" value="TrpD"/>
    <property type="match status" value="1"/>
</dbReference>
<dbReference type="InterPro" id="IPR005940">
    <property type="entry name" value="Anthranilate_Pribosyl_Tfrase"/>
</dbReference>
<dbReference type="InterPro" id="IPR000312">
    <property type="entry name" value="Glycosyl_Trfase_fam3"/>
</dbReference>
<dbReference type="InterPro" id="IPR017459">
    <property type="entry name" value="Glycosyl_Trfase_fam3_N_dom"/>
</dbReference>
<dbReference type="InterPro" id="IPR036320">
    <property type="entry name" value="Glycosyl_Trfase_fam3_N_dom_sf"/>
</dbReference>
<dbReference type="InterPro" id="IPR035902">
    <property type="entry name" value="Nuc_phospho_transferase"/>
</dbReference>
<dbReference type="NCBIfam" id="TIGR01245">
    <property type="entry name" value="trpD"/>
    <property type="match status" value="1"/>
</dbReference>
<dbReference type="PANTHER" id="PTHR43285">
    <property type="entry name" value="ANTHRANILATE PHOSPHORIBOSYLTRANSFERASE"/>
    <property type="match status" value="1"/>
</dbReference>
<dbReference type="PANTHER" id="PTHR43285:SF2">
    <property type="entry name" value="ANTHRANILATE PHOSPHORIBOSYLTRANSFERASE"/>
    <property type="match status" value="1"/>
</dbReference>
<dbReference type="Pfam" id="PF02885">
    <property type="entry name" value="Glycos_trans_3N"/>
    <property type="match status" value="1"/>
</dbReference>
<dbReference type="Pfam" id="PF00591">
    <property type="entry name" value="Glycos_transf_3"/>
    <property type="match status" value="1"/>
</dbReference>
<dbReference type="SUPFAM" id="SSF52418">
    <property type="entry name" value="Nucleoside phosphorylase/phosphoribosyltransferase catalytic domain"/>
    <property type="match status" value="1"/>
</dbReference>
<dbReference type="SUPFAM" id="SSF47648">
    <property type="entry name" value="Nucleoside phosphorylase/phosphoribosyltransferase N-terminal domain"/>
    <property type="match status" value="1"/>
</dbReference>
<reference key="1">
    <citation type="submission" date="2005-08" db="EMBL/GenBank/DDBJ databases">
        <title>Complete sequence of chromosome 1 of Nitrosospira multiformis ATCC 25196.</title>
        <authorList>
            <person name="Copeland A."/>
            <person name="Lucas S."/>
            <person name="Lapidus A."/>
            <person name="Barry K."/>
            <person name="Detter J.C."/>
            <person name="Glavina T."/>
            <person name="Hammon N."/>
            <person name="Israni S."/>
            <person name="Pitluck S."/>
            <person name="Chain P."/>
            <person name="Malfatti S."/>
            <person name="Shin M."/>
            <person name="Vergez L."/>
            <person name="Schmutz J."/>
            <person name="Larimer F."/>
            <person name="Land M."/>
            <person name="Hauser L."/>
            <person name="Kyrpides N."/>
            <person name="Lykidis A."/>
            <person name="Richardson P."/>
        </authorList>
    </citation>
    <scope>NUCLEOTIDE SEQUENCE [LARGE SCALE GENOMIC DNA]</scope>
    <source>
        <strain>ATCC 25196 / NCIMB 11849 / C 71</strain>
    </source>
</reference>
<proteinExistence type="inferred from homology"/>
<gene>
    <name evidence="1" type="primary">trpD</name>
    <name type="ordered locus">Nmul_A2563</name>
</gene>
<protein>
    <recommendedName>
        <fullName evidence="1">Anthranilate phosphoribosyltransferase</fullName>
        <ecNumber evidence="1">2.4.2.18</ecNumber>
    </recommendedName>
</protein>
<comment type="function">
    <text evidence="1">Catalyzes the transfer of the phosphoribosyl group of 5-phosphorylribose-1-pyrophosphate (PRPP) to anthranilate to yield N-(5'-phosphoribosyl)-anthranilate (PRA).</text>
</comment>
<comment type="catalytic activity">
    <reaction evidence="1">
        <text>N-(5-phospho-beta-D-ribosyl)anthranilate + diphosphate = 5-phospho-alpha-D-ribose 1-diphosphate + anthranilate</text>
        <dbReference type="Rhea" id="RHEA:11768"/>
        <dbReference type="ChEBI" id="CHEBI:16567"/>
        <dbReference type="ChEBI" id="CHEBI:18277"/>
        <dbReference type="ChEBI" id="CHEBI:33019"/>
        <dbReference type="ChEBI" id="CHEBI:58017"/>
        <dbReference type="EC" id="2.4.2.18"/>
    </reaction>
</comment>
<comment type="cofactor">
    <cofactor evidence="1">
        <name>Mg(2+)</name>
        <dbReference type="ChEBI" id="CHEBI:18420"/>
    </cofactor>
    <text evidence="1">Binds 2 magnesium ions per monomer.</text>
</comment>
<comment type="pathway">
    <text evidence="1">Amino-acid biosynthesis; L-tryptophan biosynthesis; L-tryptophan from chorismate: step 2/5.</text>
</comment>
<comment type="subunit">
    <text evidence="1">Homodimer.</text>
</comment>
<comment type="similarity">
    <text evidence="1">Belongs to the anthranilate phosphoribosyltransferase family.</text>
</comment>
<name>TRPD_NITMU</name>
<sequence>MSPQEALTRLIEHREIFHDEMLSLMRQIMRGELSPTLISAIITGLRVKKETVGEIAAAAQVMREFAAPVQVEDDRLVDTCGTGGDSAHTFNISTTAAFVAAAAGARVAKHGGRSVSSKSGSADVLEALGVNLDQTPAQIAENIREIGLGFMFAPNFHSAMKHAASVRRELGVRTLFNILGPLTNPAGAKNQLLGVFHPDLVGIVTRVLHRLGSRHVMVVHGCTGNQGGLDEITIAGETLVGELRHGQILEYTIRPEDFGMKAARIETIQAHDTAQSAEMLRAILNNQPGPPRDIVLLNAGATIYVAGIAESLAQGVKKAHAAIESGAARKKLQELVEFSNRQNRGEVSLV</sequence>
<feature type="chain" id="PRO_0000325443" description="Anthranilate phosphoribosyltransferase">
    <location>
        <begin position="1"/>
        <end position="350"/>
    </location>
</feature>
<feature type="binding site" evidence="1">
    <location>
        <position position="81"/>
    </location>
    <ligand>
        <name>5-phospho-alpha-D-ribose 1-diphosphate</name>
        <dbReference type="ChEBI" id="CHEBI:58017"/>
    </ligand>
</feature>
<feature type="binding site" evidence="1">
    <location>
        <position position="81"/>
    </location>
    <ligand>
        <name>anthranilate</name>
        <dbReference type="ChEBI" id="CHEBI:16567"/>
        <label>1</label>
    </ligand>
</feature>
<feature type="binding site" evidence="1">
    <location>
        <begin position="84"/>
        <end position="85"/>
    </location>
    <ligand>
        <name>5-phospho-alpha-D-ribose 1-diphosphate</name>
        <dbReference type="ChEBI" id="CHEBI:58017"/>
    </ligand>
</feature>
<feature type="binding site" evidence="1">
    <location>
        <position position="89"/>
    </location>
    <ligand>
        <name>5-phospho-alpha-D-ribose 1-diphosphate</name>
        <dbReference type="ChEBI" id="CHEBI:58017"/>
    </ligand>
</feature>
<feature type="binding site" evidence="1">
    <location>
        <begin position="91"/>
        <end position="94"/>
    </location>
    <ligand>
        <name>5-phospho-alpha-D-ribose 1-diphosphate</name>
        <dbReference type="ChEBI" id="CHEBI:58017"/>
    </ligand>
</feature>
<feature type="binding site" evidence="1">
    <location>
        <position position="93"/>
    </location>
    <ligand>
        <name>Mg(2+)</name>
        <dbReference type="ChEBI" id="CHEBI:18420"/>
        <label>1</label>
    </ligand>
</feature>
<feature type="binding site" evidence="1">
    <location>
        <begin position="109"/>
        <end position="117"/>
    </location>
    <ligand>
        <name>5-phospho-alpha-D-ribose 1-diphosphate</name>
        <dbReference type="ChEBI" id="CHEBI:58017"/>
    </ligand>
</feature>
<feature type="binding site" evidence="1">
    <location>
        <position position="121"/>
    </location>
    <ligand>
        <name>5-phospho-alpha-D-ribose 1-diphosphate</name>
        <dbReference type="ChEBI" id="CHEBI:58017"/>
    </ligand>
</feature>
<feature type="binding site" evidence="1">
    <location>
        <position position="167"/>
    </location>
    <ligand>
        <name>anthranilate</name>
        <dbReference type="ChEBI" id="CHEBI:16567"/>
        <label>2</label>
    </ligand>
</feature>
<feature type="binding site" evidence="1">
    <location>
        <position position="230"/>
    </location>
    <ligand>
        <name>Mg(2+)</name>
        <dbReference type="ChEBI" id="CHEBI:18420"/>
        <label>2</label>
    </ligand>
</feature>
<feature type="binding site" evidence="1">
    <location>
        <position position="231"/>
    </location>
    <ligand>
        <name>Mg(2+)</name>
        <dbReference type="ChEBI" id="CHEBI:18420"/>
        <label>1</label>
    </ligand>
</feature>
<feature type="binding site" evidence="1">
    <location>
        <position position="231"/>
    </location>
    <ligand>
        <name>Mg(2+)</name>
        <dbReference type="ChEBI" id="CHEBI:18420"/>
        <label>2</label>
    </ligand>
</feature>